<comment type="function">
    <text evidence="1">Potential transcriptional activator that may act by nicking the target promoter. Catalyzes the release of 5-methylcytosine (5-meC) from DNA by a glycosylase/lyase mechanism (By similarity).</text>
</comment>
<comment type="cofactor">
    <cofactor evidence="1">
        <name>[4Fe-4S] cluster</name>
        <dbReference type="ChEBI" id="CHEBI:49883"/>
    </cofactor>
    <text evidence="1">Binds 1 [4Fe-4S] cluster. The cluster does not appear to play a role in catalysis, but is probably involved in the proper positioning of the enzyme along the DNA strand.</text>
</comment>
<comment type="subcellular location">
    <subcellularLocation>
        <location evidence="3">Nucleus</location>
    </subcellularLocation>
</comment>
<comment type="alternative products">
    <event type="alternative splicing"/>
    <isoform>
        <id>O49498-1</id>
        <name>1</name>
        <sequence type="displayed"/>
    </isoform>
    <text>A number of isoforms are produced. According to EST sequences.</text>
</comment>
<comment type="domain">
    <text>The DEMETER domain, which is present in proteins of the subfamily, is related to the J-domain, but lacks some important conserved residues.</text>
</comment>
<comment type="miscellaneous">
    <text>Although strongly related to DNA glycosylase proteins, it differs from these proteins. The DNA repair function may not exist.</text>
</comment>
<comment type="similarity">
    <text evidence="3">Belongs to the DNA glycosylase family. DEMETER subfamily.</text>
</comment>
<comment type="sequence caution" evidence="3">
    <conflict type="erroneous gene model prediction">
        <sequence resource="EMBL-CDS" id="CAA17566"/>
    </conflict>
</comment>
<comment type="sequence caution" evidence="3">
    <conflict type="erroneous gene model prediction">
        <sequence resource="EMBL-CDS" id="CAB80123"/>
    </conflict>
</comment>
<reference key="1">
    <citation type="journal article" date="1999" name="Nature">
        <title>Sequence and analysis of chromosome 4 of the plant Arabidopsis thaliana.</title>
        <authorList>
            <person name="Mayer K.F.X."/>
            <person name="Schueller C."/>
            <person name="Wambutt R."/>
            <person name="Murphy G."/>
            <person name="Volckaert G."/>
            <person name="Pohl T."/>
            <person name="Duesterhoeft A."/>
            <person name="Stiekema W."/>
            <person name="Entian K.-D."/>
            <person name="Terryn N."/>
            <person name="Harris B."/>
            <person name="Ansorge W."/>
            <person name="Brandt P."/>
            <person name="Grivell L.A."/>
            <person name="Rieger M."/>
            <person name="Weichselgartner M."/>
            <person name="de Simone V."/>
            <person name="Obermaier B."/>
            <person name="Mache R."/>
            <person name="Mueller M."/>
            <person name="Kreis M."/>
            <person name="Delseny M."/>
            <person name="Puigdomenech P."/>
            <person name="Watson M."/>
            <person name="Schmidtheini T."/>
            <person name="Reichert B."/>
            <person name="Portetelle D."/>
            <person name="Perez-Alonso M."/>
            <person name="Boutry M."/>
            <person name="Bancroft I."/>
            <person name="Vos P."/>
            <person name="Hoheisel J."/>
            <person name="Zimmermann W."/>
            <person name="Wedler H."/>
            <person name="Ridley P."/>
            <person name="Langham S.-A."/>
            <person name="McCullagh B."/>
            <person name="Bilham L."/>
            <person name="Robben J."/>
            <person name="van der Schueren J."/>
            <person name="Grymonprez B."/>
            <person name="Chuang Y.-J."/>
            <person name="Vandenbussche F."/>
            <person name="Braeken M."/>
            <person name="Weltjens I."/>
            <person name="Voet M."/>
            <person name="Bastiaens I."/>
            <person name="Aert R."/>
            <person name="Defoor E."/>
            <person name="Weitzenegger T."/>
            <person name="Bothe G."/>
            <person name="Ramsperger U."/>
            <person name="Hilbert H."/>
            <person name="Braun M."/>
            <person name="Holzer E."/>
            <person name="Brandt A."/>
            <person name="Peters S."/>
            <person name="van Staveren M."/>
            <person name="Dirkse W."/>
            <person name="Mooijman P."/>
            <person name="Klein Lankhorst R."/>
            <person name="Rose M."/>
            <person name="Hauf J."/>
            <person name="Koetter P."/>
            <person name="Berneiser S."/>
            <person name="Hempel S."/>
            <person name="Feldpausch M."/>
            <person name="Lamberth S."/>
            <person name="Van den Daele H."/>
            <person name="De Keyser A."/>
            <person name="Buysshaert C."/>
            <person name="Gielen J."/>
            <person name="Villarroel R."/>
            <person name="De Clercq R."/>
            <person name="van Montagu M."/>
            <person name="Rogers J."/>
            <person name="Cronin A."/>
            <person name="Quail M.A."/>
            <person name="Bray-Allen S."/>
            <person name="Clark L."/>
            <person name="Doggett J."/>
            <person name="Hall S."/>
            <person name="Kay M."/>
            <person name="Lennard N."/>
            <person name="McLay K."/>
            <person name="Mayes R."/>
            <person name="Pettett A."/>
            <person name="Rajandream M.A."/>
            <person name="Lyne M."/>
            <person name="Benes V."/>
            <person name="Rechmann S."/>
            <person name="Borkova D."/>
            <person name="Bloecker H."/>
            <person name="Scharfe M."/>
            <person name="Grimm M."/>
            <person name="Loehnert T.-H."/>
            <person name="Dose S."/>
            <person name="de Haan M."/>
            <person name="Maarse A.C."/>
            <person name="Schaefer M."/>
            <person name="Mueller-Auer S."/>
            <person name="Gabel C."/>
            <person name="Fuchs M."/>
            <person name="Fartmann B."/>
            <person name="Granderath K."/>
            <person name="Dauner D."/>
            <person name="Herzl A."/>
            <person name="Neumann S."/>
            <person name="Argiriou A."/>
            <person name="Vitale D."/>
            <person name="Liguori R."/>
            <person name="Piravandi E."/>
            <person name="Massenet O."/>
            <person name="Quigley F."/>
            <person name="Clabauld G."/>
            <person name="Muendlein A."/>
            <person name="Felber R."/>
            <person name="Schnabl S."/>
            <person name="Hiller R."/>
            <person name="Schmidt W."/>
            <person name="Lecharny A."/>
            <person name="Aubourg S."/>
            <person name="Chefdor F."/>
            <person name="Cooke R."/>
            <person name="Berger C."/>
            <person name="Monfort A."/>
            <person name="Casacuberta E."/>
            <person name="Gibbons T."/>
            <person name="Weber N."/>
            <person name="Vandenbol M."/>
            <person name="Bargues M."/>
            <person name="Terol J."/>
            <person name="Torres A."/>
            <person name="Perez-Perez A."/>
            <person name="Purnelle B."/>
            <person name="Bent E."/>
            <person name="Johnson S."/>
            <person name="Tacon D."/>
            <person name="Jesse T."/>
            <person name="Heijnen L."/>
            <person name="Schwarz S."/>
            <person name="Scholler P."/>
            <person name="Heber S."/>
            <person name="Francs P."/>
            <person name="Bielke C."/>
            <person name="Frishman D."/>
            <person name="Haase D."/>
            <person name="Lemcke K."/>
            <person name="Mewes H.-W."/>
            <person name="Stocker S."/>
            <person name="Zaccaria P."/>
            <person name="Bevan M."/>
            <person name="Wilson R.K."/>
            <person name="de la Bastide M."/>
            <person name="Habermann K."/>
            <person name="Parnell L."/>
            <person name="Dedhia N."/>
            <person name="Gnoj L."/>
            <person name="Schutz K."/>
            <person name="Huang E."/>
            <person name="Spiegel L."/>
            <person name="Sekhon M."/>
            <person name="Murray J."/>
            <person name="Sheet P."/>
            <person name="Cordes M."/>
            <person name="Abu-Threideh J."/>
            <person name="Stoneking T."/>
            <person name="Kalicki J."/>
            <person name="Graves T."/>
            <person name="Harmon G."/>
            <person name="Edwards J."/>
            <person name="Latreille P."/>
            <person name="Courtney L."/>
            <person name="Cloud J."/>
            <person name="Abbott A."/>
            <person name="Scott K."/>
            <person name="Johnson D."/>
            <person name="Minx P."/>
            <person name="Bentley D."/>
            <person name="Fulton B."/>
            <person name="Miller N."/>
            <person name="Greco T."/>
            <person name="Kemp K."/>
            <person name="Kramer J."/>
            <person name="Fulton L."/>
            <person name="Mardis E."/>
            <person name="Dante M."/>
            <person name="Pepin K."/>
            <person name="Hillier L.W."/>
            <person name="Nelson J."/>
            <person name="Spieth J."/>
            <person name="Ryan E."/>
            <person name="Andrews S."/>
            <person name="Geisel C."/>
            <person name="Layman D."/>
            <person name="Du H."/>
            <person name="Ali J."/>
            <person name="Berghoff A."/>
            <person name="Jones K."/>
            <person name="Drone K."/>
            <person name="Cotton M."/>
            <person name="Joshu C."/>
            <person name="Antonoiu B."/>
            <person name="Zidanic M."/>
            <person name="Strong C."/>
            <person name="Sun H."/>
            <person name="Lamar B."/>
            <person name="Yordan C."/>
            <person name="Ma P."/>
            <person name="Zhong J."/>
            <person name="Preston R."/>
            <person name="Vil D."/>
            <person name="Shekher M."/>
            <person name="Matero A."/>
            <person name="Shah R."/>
            <person name="Swaby I.K."/>
            <person name="O'Shaughnessy A."/>
            <person name="Rodriguez M."/>
            <person name="Hoffman J."/>
            <person name="Till S."/>
            <person name="Granat S."/>
            <person name="Shohdy N."/>
            <person name="Hasegawa A."/>
            <person name="Hameed A."/>
            <person name="Lodhi M."/>
            <person name="Johnson A."/>
            <person name="Chen E."/>
            <person name="Marra M.A."/>
            <person name="Martienssen R."/>
            <person name="McCombie W.R."/>
        </authorList>
    </citation>
    <scope>NUCLEOTIDE SEQUENCE [LARGE SCALE GENOMIC DNA]</scope>
    <source>
        <strain>cv. Columbia</strain>
    </source>
</reference>
<reference key="2">
    <citation type="journal article" date="2017" name="Plant J.">
        <title>Araport11: a complete reannotation of the Arabidopsis thaliana reference genome.</title>
        <authorList>
            <person name="Cheng C.Y."/>
            <person name="Krishnakumar V."/>
            <person name="Chan A.P."/>
            <person name="Thibaud-Nissen F."/>
            <person name="Schobel S."/>
            <person name="Town C.D."/>
        </authorList>
    </citation>
    <scope>GENOME REANNOTATION</scope>
    <source>
        <strain>cv. Columbia</strain>
    </source>
</reference>
<reference key="3">
    <citation type="submission" date="2004-08" db="EMBL/GenBank/DDBJ databases">
        <title>Reconstruction of cDNA sequences for hypothetical genes in Arabidopsis thaliana from 5' and 3' RACE products.</title>
        <authorList>
            <person name="Xiao Y.-L."/>
            <person name="Underwood B.A."/>
            <person name="Moskal W.A. Jr."/>
            <person name="Wang W."/>
            <person name="Redman J.C."/>
            <person name="Wu H.C."/>
            <person name="Utterback T."/>
            <person name="Town C.D."/>
        </authorList>
    </citation>
    <scope>NUCLEOTIDE SEQUENCE [LARGE SCALE MRNA]</scope>
    <source>
        <strain>cv. Columbia</strain>
    </source>
</reference>
<reference key="4">
    <citation type="journal article" date="2002" name="Cell">
        <title>DEMETER, a DNA glycosylase domain protein, is required for endosperm gene imprinting and seed viability in Arabidopsis.</title>
        <authorList>
            <person name="Choi Y."/>
            <person name="Gehring M."/>
            <person name="Johnson L."/>
            <person name="Hannon M."/>
            <person name="Harada J.J."/>
            <person name="Goldberg R.B."/>
            <person name="Jacobsen S.E."/>
            <person name="Fischer R.L."/>
        </authorList>
    </citation>
    <scope>NOMENCLATURE</scope>
</reference>
<sequence>MLTDGSQHTYQNGETKNSKEHERKCDESAHLQDNSQTTHKKKEKKNSKEKHGIKHSESEHLQDDISQRVTGKGRRRNSKGTPKKLRFNRPRILEDGKKPRNPATTRLRTISNKRRKKDIDSEDEVIPELATPTKESFPKRRKNEKIKRSVARTLNFKQEIVLSCLEFDKICGPIFPRGKKRTTTRRRYDFLCFLLPMPVWKKQSRRSKRRKNMVRWARIASSSKLLEETLPLIVSHPTINGQADASLHIDDTLVRHVVSKQTKKSANNVIEHLNRQITYQKDHGLSSLADVPLHIEDTLIKSASSVLSERPIKKTKDIAKLIKDMGRLKINKKVTTMIKADKKLVTAKVNLDPETIKEWDVLMVNDSPSRSYDDKETEAKWKKEREIFQTRIDLFINRMHRLQGNRKFKQWKGSVVDSVVGVFLTQNTTDYLSSNAFMSVAAKFPVDAREGLSYYIEEPQDAKSSECIILSDESISKVEDHENTAKRKNEKTGIIEDEIVDWNNLRRMYTKEGSRPEMHMDSVNWSDVRLSGQNVLETTIKKRGQFRILSERILKFLNDEVNQNGNIDLEWLRNAPSHLVKRYLLEIEGIGLKSAECVRLLGLKHHAFPVDTNVGRIAVRLGLVPLEPLPNGVQMHQLFEYPSMDSIQKYLWPRLCKLPQETLYELHYQMITFGKVFCTKTIPNCNACPMKSECKYFASAYVSSKVLLESPEEKMHEPNTFMNAHSQDVAVDMTSNINLVEECVSSGCSDQAICYKPLVEFPSSPRAEIPESTDIEDVPFMNLYQSYASVPKIDFDLDALKKSVEDALVISGRMSSSDEEISKALVIPTPENACIPIKPPRKMKYYNRLRTEHVVYVLPDNHELLHDFERRKLDDPSPYLLAIWQPGETSSSFVPPKKKCSSDGSKLCKIKNCSYCWTIREQNSNIFRGTILIPCRTAMRGAFPLNGTYFQTNEVFADHETSLNPIVFRRELCKGLEKRALYCGSTVTSIFKLLDTRRIELCFWTGFLCLRAFDRKQRDPKELVRRLHTPPDERGPKFMSDDDI</sequence>
<feature type="chain" id="PRO_0000102248" description="DEMETER-like protein 3">
    <location>
        <begin position="1"/>
        <end position="1044"/>
    </location>
</feature>
<feature type="region of interest" description="Disordered" evidence="2">
    <location>
        <begin position="1"/>
        <end position="107"/>
    </location>
</feature>
<feature type="region of interest" description="DEMETER">
    <location>
        <begin position="348"/>
        <end position="445"/>
    </location>
</feature>
<feature type="region of interest" description="Disordered" evidence="2">
    <location>
        <begin position="1024"/>
        <end position="1044"/>
    </location>
</feature>
<feature type="compositionally biased region" description="Polar residues" evidence="2">
    <location>
        <begin position="1"/>
        <end position="15"/>
    </location>
</feature>
<feature type="compositionally biased region" description="Basic and acidic residues" evidence="2">
    <location>
        <begin position="16"/>
        <end position="30"/>
    </location>
</feature>
<feature type="compositionally biased region" description="Basic residues" evidence="2">
    <location>
        <begin position="38"/>
        <end position="53"/>
    </location>
</feature>
<feature type="compositionally biased region" description="Basic and acidic residues" evidence="2">
    <location>
        <begin position="54"/>
        <end position="66"/>
    </location>
</feature>
<feature type="compositionally biased region" description="Basic residues" evidence="2">
    <location>
        <begin position="71"/>
        <end position="89"/>
    </location>
</feature>
<feature type="binding site" evidence="1">
    <location>
        <position position="678"/>
    </location>
    <ligand>
        <name>[4Fe-4S] cluster</name>
        <dbReference type="ChEBI" id="CHEBI:49883"/>
    </ligand>
</feature>
<feature type="binding site" evidence="1">
    <location>
        <position position="685"/>
    </location>
    <ligand>
        <name>[4Fe-4S] cluster</name>
        <dbReference type="ChEBI" id="CHEBI:49883"/>
    </ligand>
</feature>
<feature type="binding site" evidence="1">
    <location>
        <position position="688"/>
    </location>
    <ligand>
        <name>[4Fe-4S] cluster</name>
        <dbReference type="ChEBI" id="CHEBI:49883"/>
    </ligand>
</feature>
<feature type="binding site" evidence="1">
    <location>
        <position position="694"/>
    </location>
    <ligand>
        <name>[4Fe-4S] cluster</name>
        <dbReference type="ChEBI" id="CHEBI:49883"/>
    </ligand>
</feature>
<feature type="sequence conflict" description="In Ref. 3; AAU44533." evidence="3" ref="3">
    <original>E</original>
    <variation>G</variation>
    <location>
        <position position="14"/>
    </location>
</feature>
<accession>O49498</accession>
<accession>Q5XV59</accession>
<gene>
    <name type="primary">DML3</name>
    <name type="ordered locus">At4g34060</name>
    <name type="ORF">F28A23.180</name>
</gene>
<protein>
    <recommendedName>
        <fullName>DEMETER-like protein 3</fullName>
        <ecNumber>3.2.2.-</ecNumber>
    </recommendedName>
</protein>
<name>DML3_ARATH</name>
<evidence type="ECO:0000250" key="1"/>
<evidence type="ECO:0000256" key="2">
    <source>
        <dbReference type="SAM" id="MobiDB-lite"/>
    </source>
</evidence>
<evidence type="ECO:0000305" key="3"/>
<keyword id="KW-0004">4Fe-4S</keyword>
<keyword id="KW-0010">Activator</keyword>
<keyword id="KW-0025">Alternative splicing</keyword>
<keyword id="KW-0238">DNA-binding</keyword>
<keyword id="KW-0378">Hydrolase</keyword>
<keyword id="KW-0408">Iron</keyword>
<keyword id="KW-0411">Iron-sulfur</keyword>
<keyword id="KW-0479">Metal-binding</keyword>
<keyword id="KW-0539">Nucleus</keyword>
<keyword id="KW-1185">Reference proteome</keyword>
<keyword id="KW-0804">Transcription</keyword>
<keyword id="KW-0805">Transcription regulation</keyword>
<organism>
    <name type="scientific">Arabidopsis thaliana</name>
    <name type="common">Mouse-ear cress</name>
    <dbReference type="NCBI Taxonomy" id="3702"/>
    <lineage>
        <taxon>Eukaryota</taxon>
        <taxon>Viridiplantae</taxon>
        <taxon>Streptophyta</taxon>
        <taxon>Embryophyta</taxon>
        <taxon>Tracheophyta</taxon>
        <taxon>Spermatophyta</taxon>
        <taxon>Magnoliopsida</taxon>
        <taxon>eudicotyledons</taxon>
        <taxon>Gunneridae</taxon>
        <taxon>Pentapetalae</taxon>
        <taxon>rosids</taxon>
        <taxon>malvids</taxon>
        <taxon>Brassicales</taxon>
        <taxon>Brassicaceae</taxon>
        <taxon>Camelineae</taxon>
        <taxon>Arabidopsis</taxon>
    </lineage>
</organism>
<proteinExistence type="evidence at transcript level"/>
<dbReference type="EC" id="3.2.2.-"/>
<dbReference type="EMBL" id="AL021961">
    <property type="protein sequence ID" value="CAA17566.1"/>
    <property type="status" value="ALT_SEQ"/>
    <property type="molecule type" value="Genomic_DNA"/>
</dbReference>
<dbReference type="EMBL" id="AL161584">
    <property type="protein sequence ID" value="CAB80123.1"/>
    <property type="status" value="ALT_SEQ"/>
    <property type="molecule type" value="Genomic_DNA"/>
</dbReference>
<dbReference type="EMBL" id="CP002687">
    <property type="protein sequence ID" value="AEE86316.1"/>
    <property type="molecule type" value="Genomic_DNA"/>
</dbReference>
<dbReference type="EMBL" id="AY735663">
    <property type="protein sequence ID" value="AAU44533.1"/>
    <property type="molecule type" value="mRNA"/>
</dbReference>
<dbReference type="PIR" id="T05430">
    <property type="entry name" value="T05430"/>
</dbReference>
<dbReference type="RefSeq" id="NP_195132.3">
    <molecule id="O49498-1"/>
    <property type="nucleotide sequence ID" value="NM_119567.4"/>
</dbReference>
<dbReference type="SMR" id="O49498"/>
<dbReference type="STRING" id="3702.O49498"/>
<dbReference type="PaxDb" id="3702-AT4G34060.1"/>
<dbReference type="EnsemblPlants" id="AT4G34060.1">
    <molecule id="O49498-1"/>
    <property type="protein sequence ID" value="AT4G34060.1"/>
    <property type="gene ID" value="AT4G34060"/>
</dbReference>
<dbReference type="GeneID" id="829552"/>
<dbReference type="Gramene" id="AT4G34060.1">
    <molecule id="O49498-1"/>
    <property type="protein sequence ID" value="AT4G34060.1"/>
    <property type="gene ID" value="AT4G34060"/>
</dbReference>
<dbReference type="KEGG" id="ath:AT4G34060"/>
<dbReference type="Araport" id="AT4G34060"/>
<dbReference type="TAIR" id="AT4G34060">
    <property type="gene designation" value="DML3"/>
</dbReference>
<dbReference type="eggNOG" id="ENOG502QQKH">
    <property type="taxonomic scope" value="Eukaryota"/>
</dbReference>
<dbReference type="HOGENOM" id="CLU_275005_0_0_1"/>
<dbReference type="InParanoid" id="O49498"/>
<dbReference type="PhylomeDB" id="O49498"/>
<dbReference type="PRO" id="PR:O49498"/>
<dbReference type="Proteomes" id="UP000006548">
    <property type="component" value="Chromosome 4"/>
</dbReference>
<dbReference type="ExpressionAtlas" id="O49498">
    <property type="expression patterns" value="baseline and differential"/>
</dbReference>
<dbReference type="GO" id="GO:0005634">
    <property type="term" value="C:nucleus"/>
    <property type="evidence" value="ECO:0007669"/>
    <property type="project" value="UniProtKB-SubCell"/>
</dbReference>
<dbReference type="GO" id="GO:0051539">
    <property type="term" value="F:4 iron, 4 sulfur cluster binding"/>
    <property type="evidence" value="ECO:0007669"/>
    <property type="project" value="UniProtKB-KW"/>
</dbReference>
<dbReference type="GO" id="GO:0003677">
    <property type="term" value="F:DNA binding"/>
    <property type="evidence" value="ECO:0007669"/>
    <property type="project" value="UniProtKB-KW"/>
</dbReference>
<dbReference type="GO" id="GO:0035514">
    <property type="term" value="F:DNA demethylase activity"/>
    <property type="evidence" value="ECO:0007669"/>
    <property type="project" value="InterPro"/>
</dbReference>
<dbReference type="GO" id="GO:0019104">
    <property type="term" value="F:DNA N-glycosylase activity"/>
    <property type="evidence" value="ECO:0000314"/>
    <property type="project" value="TAIR"/>
</dbReference>
<dbReference type="GO" id="GO:0046872">
    <property type="term" value="F:metal ion binding"/>
    <property type="evidence" value="ECO:0007669"/>
    <property type="project" value="UniProtKB-KW"/>
</dbReference>
<dbReference type="GO" id="GO:0006284">
    <property type="term" value="P:base-excision repair"/>
    <property type="evidence" value="ECO:0007669"/>
    <property type="project" value="InterPro"/>
</dbReference>
<dbReference type="GO" id="GO:0141166">
    <property type="term" value="P:chromosomal 5-methylcytosine DNA demethylation pathway"/>
    <property type="evidence" value="ECO:0007669"/>
    <property type="project" value="InterPro"/>
</dbReference>
<dbReference type="Gene3D" id="1.10.1670.10">
    <property type="entry name" value="Helix-hairpin-Helix base-excision DNA repair enzymes (C-terminal)"/>
    <property type="match status" value="1"/>
</dbReference>
<dbReference type="InterPro" id="IPR044811">
    <property type="entry name" value="DME/ROS1"/>
</dbReference>
<dbReference type="InterPro" id="IPR011257">
    <property type="entry name" value="DNA_glycosylase"/>
</dbReference>
<dbReference type="InterPro" id="IPR003265">
    <property type="entry name" value="HhH-GPD_domain"/>
</dbReference>
<dbReference type="InterPro" id="IPR023170">
    <property type="entry name" value="HhH_base_excis_C"/>
</dbReference>
<dbReference type="InterPro" id="IPR028924">
    <property type="entry name" value="Perm-CXXC"/>
</dbReference>
<dbReference type="InterPro" id="IPR028925">
    <property type="entry name" value="RRM_DME"/>
</dbReference>
<dbReference type="PANTHER" id="PTHR46213:SF13">
    <property type="entry name" value="DEMETER-LIKE PROTEIN 2-RELATED"/>
    <property type="match status" value="1"/>
</dbReference>
<dbReference type="PANTHER" id="PTHR46213">
    <property type="entry name" value="TRANSCRIPTIONAL ACTIVATOR DEMETER"/>
    <property type="match status" value="1"/>
</dbReference>
<dbReference type="Pfam" id="PF15629">
    <property type="entry name" value="Perm-CXXC"/>
    <property type="match status" value="1"/>
</dbReference>
<dbReference type="Pfam" id="PF15628">
    <property type="entry name" value="RRM_DME"/>
    <property type="match status" value="1"/>
</dbReference>
<dbReference type="SMART" id="SM00478">
    <property type="entry name" value="ENDO3c"/>
    <property type="match status" value="1"/>
</dbReference>
<dbReference type="SUPFAM" id="SSF48150">
    <property type="entry name" value="DNA-glycosylase"/>
    <property type="match status" value="1"/>
</dbReference>